<name>PLS4_PITNO</name>
<keyword id="KW-0027">Amidation</keyword>
<keyword id="KW-0878">Amphibian defense peptide</keyword>
<keyword id="KW-0044">Antibiotic</keyword>
<keyword id="KW-0929">Antimicrobial</keyword>
<keyword id="KW-0903">Direct protein sequencing</keyword>
<keyword id="KW-0964">Secreted</keyword>
<reference evidence="4" key="1">
    <citation type="journal article" date="2013" name="Exp. Parasitol.">
        <title>Antimicrobial peptides isolated from Phyllomedusa nordestina (Amphibia) alter the permeability of plasma membrane of Leishmania and Trypanosoma cruzi.</title>
        <authorList>
            <person name="Pinto E.G."/>
            <person name="Pimenta D.C."/>
            <person name="Antoniazzi M.M."/>
            <person name="Jared C."/>
            <person name="Tempone A.G."/>
        </authorList>
    </citation>
    <scope>PROTEIN SEQUENCE</scope>
    <scope>FUNCTION</scope>
    <scope>SUBCELLULAR LOCATION</scope>
    <scope>MASS SPECTROMETRY</scope>
    <scope>AMIDATION AT PHE-19</scope>
    <source>
        <tissue evidence="3">Skin secretion</tissue>
    </source>
</reference>
<dbReference type="GO" id="GO:0005576">
    <property type="term" value="C:extracellular region"/>
    <property type="evidence" value="ECO:0007669"/>
    <property type="project" value="UniProtKB-SubCell"/>
</dbReference>
<dbReference type="GO" id="GO:0042742">
    <property type="term" value="P:defense response to bacterium"/>
    <property type="evidence" value="ECO:0007669"/>
    <property type="project" value="UniProtKB-KW"/>
</dbReference>
<accession>C0HKP9</accession>
<protein>
    <recommendedName>
        <fullName evidence="4">Phylloseptin-N4</fullName>
        <shortName evidence="4">PLS-N4</shortName>
    </recommendedName>
    <alternativeName>
        <fullName evidence="3">Phylloseptin-7</fullName>
    </alternativeName>
</protein>
<organism evidence="3">
    <name type="scientific">Pithecopus nordestinus</name>
    <name type="common">Northeastern Brazilian leaf frog</name>
    <name type="synonym">Phyllomedusa nordestina</name>
    <dbReference type="NCBI Taxonomy" id="2034992"/>
    <lineage>
        <taxon>Eukaryota</taxon>
        <taxon>Metazoa</taxon>
        <taxon>Chordata</taxon>
        <taxon>Craniata</taxon>
        <taxon>Vertebrata</taxon>
        <taxon>Euteleostomi</taxon>
        <taxon>Amphibia</taxon>
        <taxon>Batrachia</taxon>
        <taxon>Anura</taxon>
        <taxon>Neobatrachia</taxon>
        <taxon>Hyloidea</taxon>
        <taxon>Hylidae</taxon>
        <taxon>Phyllomedusinae</taxon>
        <taxon>Pithecopus</taxon>
    </lineage>
</organism>
<proteinExistence type="evidence at protein level"/>
<feature type="peptide" id="PRO_0000441008" description="Phylloseptin-N4" evidence="2">
    <location>
        <begin position="1"/>
        <end position="19"/>
    </location>
</feature>
<feature type="modified residue" description="Phenylalanine amide" evidence="2">
    <location>
        <position position="19"/>
    </location>
</feature>
<comment type="function">
    <text evidence="1 2">Has antiparasitic activity against trypomastigote form of T.cruzi (IC(50)=0.34 uM) and against promastigote form of L.infantum (IC(50)=10.06 uM) (PubMed:24113627). Probably acts by permeabilizing cell membranes (PubMed:24113627). In vitro, shows slight cytotoxicity against macrophages (IC(50)=34.42 uM) (PubMed:24113627). Has antibacterial activity (By similarity).</text>
</comment>
<comment type="subcellular location">
    <subcellularLocation>
        <location evidence="2">Secreted</location>
    </subcellularLocation>
</comment>
<comment type="tissue specificity">
    <text evidence="5">Expressed by the skin glands.</text>
</comment>
<comment type="mass spectrometry" mass="2048.49" method="Electrospray" evidence="2"/>
<comment type="similarity">
    <text evidence="4">Belongs to the frog skin active peptide (FSAP) family. Phylloseptin subfamily.</text>
</comment>
<comment type="online information" name="The antimicrobial peptide database">
    <link uri="https://wangapd3.com/database/query_output.php?ID=00762"/>
</comment>
<sequence length="19" mass="2049">FLSLIPHAINAVSAIAKHF</sequence>
<evidence type="ECO:0000250" key="1">
    <source>
        <dbReference type="UniProtKB" id="P85882"/>
    </source>
</evidence>
<evidence type="ECO:0000269" key="2">
    <source>
    </source>
</evidence>
<evidence type="ECO:0000303" key="3">
    <source>
    </source>
</evidence>
<evidence type="ECO:0000305" key="4"/>
<evidence type="ECO:0000305" key="5">
    <source>
    </source>
</evidence>